<keyword id="KW-0349">Heme</keyword>
<keyword id="KW-0376">Hydrogen peroxide</keyword>
<keyword id="KW-0408">Iron</keyword>
<keyword id="KW-0479">Metal-binding</keyword>
<keyword id="KW-0560">Oxidoreductase</keyword>
<keyword id="KW-0575">Peroxidase</keyword>
<keyword id="KW-0732">Signal</keyword>
<sequence length="728" mass="81170">MDKTQSSQGKCPVMHGANSAVASNNMDWWPKALNLDILHQHDKKTDPMDPKFNYREAFNSLDLAAVKRDLNALMTDSQDWWPADWGHYGGLMIRMAWHSAGTYRVADGRGGAGTGNQRFAPLNSWPDNANLDKARRLLWPIKKKYGNKLSWADLMILAGNVAYESMGLKTYGFAGGREDIWHPEKDIYWGSEKQWLAPTENPNSRYSGERDLENPLAAVMMGLIYVNPEGVDGKPDPLRTAQDVRVTFARMAMNDEETVALTAGGHTVGKCHGNGKAQDLGPEPEGEDLEAQGLGWLNKKGPGIGANAVTSGLEGAWTTYPTQWDNGYFHLLLNYDWELKKSPAGASQWEPINIKEEDKVVSVGDPNRKFNPIMTDADMAMKMDPEYRKISEKFYQDPAYFSEVFARAWFKLTHRDLGPKSRYLGPEVPNEDLLWQDPIPSVDYRLDASEIVDLKAKLLASGLSVSELVATAWDSARTFRGSDFRGGANGARIRLAPQKDWQANEPERLQKVLKVLTELQASLSKKVSIADLIVLGGAAAIEKAAHEAGVKVTVPFIPGRGDATQEMTDVESFAVLEPLHDAYRNWQKKDYVVQPEEMMLDRTQLMGLTAHEMTVLVGGMRVLGTNYGGTRHGVFTDKVGVLTNDFFVNLTDMAYNWKPAGSNLYQIVERKTGAVKWTASRVDLVFGSNSILRAYAEMYAQDDAKEKFVHDFVAAWTKVMNADRFDLA</sequence>
<name>KATG1_SHESM</name>
<proteinExistence type="inferred from homology"/>
<feature type="signal peptide" evidence="1">
    <location>
        <begin position="1"/>
        <end position="22"/>
    </location>
</feature>
<feature type="chain" id="PRO_0000354925" description="Catalase-peroxidase 1">
    <location>
        <begin position="23"/>
        <end position="728"/>
    </location>
</feature>
<feature type="active site" description="Proton acceptor" evidence="1">
    <location>
        <position position="98"/>
    </location>
</feature>
<feature type="binding site" description="axial binding residue" evidence="1">
    <location>
        <position position="266"/>
    </location>
    <ligand>
        <name>heme b</name>
        <dbReference type="ChEBI" id="CHEBI:60344"/>
    </ligand>
    <ligandPart>
        <name>Fe</name>
        <dbReference type="ChEBI" id="CHEBI:18248"/>
    </ligandPart>
</feature>
<feature type="site" description="Transition state stabilizer" evidence="1">
    <location>
        <position position="94"/>
    </location>
</feature>
<feature type="cross-link" description="Tryptophyl-tyrosyl-methioninium (Trp-Tyr) (with M-251)" evidence="1">
    <location>
        <begin position="97"/>
        <end position="225"/>
    </location>
</feature>
<feature type="cross-link" description="Tryptophyl-tyrosyl-methioninium (Tyr-Met) (with W-97)" evidence="1">
    <location>
        <begin position="225"/>
        <end position="251"/>
    </location>
</feature>
<evidence type="ECO:0000255" key="1">
    <source>
        <dbReference type="HAMAP-Rule" id="MF_01961"/>
    </source>
</evidence>
<accession>Q0HNH6</accession>
<dbReference type="EC" id="1.11.1.21" evidence="1"/>
<dbReference type="EMBL" id="CP000446">
    <property type="protein sequence ID" value="ABI37391.1"/>
    <property type="molecule type" value="Genomic_DNA"/>
</dbReference>
<dbReference type="RefSeq" id="WP_011621117.1">
    <property type="nucleotide sequence ID" value="NC_008321.1"/>
</dbReference>
<dbReference type="SMR" id="Q0HNH6"/>
<dbReference type="PeroxiBase" id="3649">
    <property type="entry name" value="SHspCP02_MR-4"/>
</dbReference>
<dbReference type="KEGG" id="she:Shewmr4_0311"/>
<dbReference type="HOGENOM" id="CLU_025424_2_0_6"/>
<dbReference type="GO" id="GO:0005829">
    <property type="term" value="C:cytosol"/>
    <property type="evidence" value="ECO:0007669"/>
    <property type="project" value="TreeGrafter"/>
</dbReference>
<dbReference type="GO" id="GO:0004096">
    <property type="term" value="F:catalase activity"/>
    <property type="evidence" value="ECO:0007669"/>
    <property type="project" value="UniProtKB-UniRule"/>
</dbReference>
<dbReference type="GO" id="GO:0020037">
    <property type="term" value="F:heme binding"/>
    <property type="evidence" value="ECO:0007669"/>
    <property type="project" value="InterPro"/>
</dbReference>
<dbReference type="GO" id="GO:0046872">
    <property type="term" value="F:metal ion binding"/>
    <property type="evidence" value="ECO:0007669"/>
    <property type="project" value="UniProtKB-KW"/>
</dbReference>
<dbReference type="GO" id="GO:0070301">
    <property type="term" value="P:cellular response to hydrogen peroxide"/>
    <property type="evidence" value="ECO:0007669"/>
    <property type="project" value="TreeGrafter"/>
</dbReference>
<dbReference type="GO" id="GO:0042744">
    <property type="term" value="P:hydrogen peroxide catabolic process"/>
    <property type="evidence" value="ECO:0007669"/>
    <property type="project" value="UniProtKB-KW"/>
</dbReference>
<dbReference type="CDD" id="cd00649">
    <property type="entry name" value="catalase_peroxidase_1"/>
    <property type="match status" value="1"/>
</dbReference>
<dbReference type="CDD" id="cd08200">
    <property type="entry name" value="catalase_peroxidase_2"/>
    <property type="match status" value="1"/>
</dbReference>
<dbReference type="FunFam" id="1.10.420.10:FF:000002">
    <property type="entry name" value="Catalase-peroxidase"/>
    <property type="match status" value="1"/>
</dbReference>
<dbReference type="FunFam" id="1.10.420.10:FF:000004">
    <property type="entry name" value="Catalase-peroxidase"/>
    <property type="match status" value="1"/>
</dbReference>
<dbReference type="FunFam" id="1.10.520.10:FF:000002">
    <property type="entry name" value="Catalase-peroxidase"/>
    <property type="match status" value="1"/>
</dbReference>
<dbReference type="Gene3D" id="1.10.520.10">
    <property type="match status" value="2"/>
</dbReference>
<dbReference type="Gene3D" id="1.10.420.10">
    <property type="entry name" value="Peroxidase, domain 2"/>
    <property type="match status" value="2"/>
</dbReference>
<dbReference type="HAMAP" id="MF_01961">
    <property type="entry name" value="Catal_peroxid"/>
    <property type="match status" value="1"/>
</dbReference>
<dbReference type="InterPro" id="IPR000763">
    <property type="entry name" value="Catalase_peroxidase"/>
</dbReference>
<dbReference type="InterPro" id="IPR002016">
    <property type="entry name" value="Haem_peroxidase"/>
</dbReference>
<dbReference type="InterPro" id="IPR010255">
    <property type="entry name" value="Haem_peroxidase_sf"/>
</dbReference>
<dbReference type="InterPro" id="IPR019794">
    <property type="entry name" value="Peroxidases_AS"/>
</dbReference>
<dbReference type="NCBIfam" id="TIGR00198">
    <property type="entry name" value="cat_per_HPI"/>
    <property type="match status" value="1"/>
</dbReference>
<dbReference type="NCBIfam" id="NF011635">
    <property type="entry name" value="PRK15061.1"/>
    <property type="match status" value="1"/>
</dbReference>
<dbReference type="PANTHER" id="PTHR30555:SF6">
    <property type="entry name" value="CATALASE-PEROXIDASE"/>
    <property type="match status" value="1"/>
</dbReference>
<dbReference type="PANTHER" id="PTHR30555">
    <property type="entry name" value="HYDROPEROXIDASE I, BIFUNCTIONAL CATALASE-PEROXIDASE"/>
    <property type="match status" value="1"/>
</dbReference>
<dbReference type="Pfam" id="PF00141">
    <property type="entry name" value="peroxidase"/>
    <property type="match status" value="2"/>
</dbReference>
<dbReference type="PRINTS" id="PR00460">
    <property type="entry name" value="BPEROXIDASE"/>
</dbReference>
<dbReference type="PRINTS" id="PR00458">
    <property type="entry name" value="PEROXIDASE"/>
</dbReference>
<dbReference type="SUPFAM" id="SSF48113">
    <property type="entry name" value="Heme-dependent peroxidases"/>
    <property type="match status" value="2"/>
</dbReference>
<dbReference type="PROSITE" id="PS00436">
    <property type="entry name" value="PEROXIDASE_2"/>
    <property type="match status" value="1"/>
</dbReference>
<dbReference type="PROSITE" id="PS50873">
    <property type="entry name" value="PEROXIDASE_4"/>
    <property type="match status" value="1"/>
</dbReference>
<protein>
    <recommendedName>
        <fullName evidence="1">Catalase-peroxidase 1</fullName>
        <shortName evidence="1">CP 1</shortName>
        <ecNumber evidence="1">1.11.1.21</ecNumber>
    </recommendedName>
    <alternativeName>
        <fullName evidence="1">Peroxidase/catalase 1</fullName>
    </alternativeName>
</protein>
<comment type="function">
    <text evidence="1">Bifunctional enzyme with both catalase and broad-spectrum peroxidase activity.</text>
</comment>
<comment type="catalytic activity">
    <reaction evidence="1">
        <text>H2O2 + AH2 = A + 2 H2O</text>
        <dbReference type="Rhea" id="RHEA:30275"/>
        <dbReference type="ChEBI" id="CHEBI:13193"/>
        <dbReference type="ChEBI" id="CHEBI:15377"/>
        <dbReference type="ChEBI" id="CHEBI:16240"/>
        <dbReference type="ChEBI" id="CHEBI:17499"/>
        <dbReference type="EC" id="1.11.1.21"/>
    </reaction>
</comment>
<comment type="catalytic activity">
    <reaction evidence="1">
        <text>2 H2O2 = O2 + 2 H2O</text>
        <dbReference type="Rhea" id="RHEA:20309"/>
        <dbReference type="ChEBI" id="CHEBI:15377"/>
        <dbReference type="ChEBI" id="CHEBI:15379"/>
        <dbReference type="ChEBI" id="CHEBI:16240"/>
        <dbReference type="EC" id="1.11.1.21"/>
    </reaction>
</comment>
<comment type="cofactor">
    <cofactor evidence="1">
        <name>heme b</name>
        <dbReference type="ChEBI" id="CHEBI:60344"/>
    </cofactor>
    <text evidence="1">Binds 1 heme b (iron(II)-protoporphyrin IX) group per dimer.</text>
</comment>
<comment type="subunit">
    <text evidence="1">Homodimer or homotetramer.</text>
</comment>
<comment type="PTM">
    <text evidence="1">Formation of the three residue Trp-Tyr-Met cross-link is important for the catalase, but not the peroxidase activity of the enzyme.</text>
</comment>
<comment type="similarity">
    <text evidence="1">Belongs to the peroxidase family. Peroxidase/catalase subfamily.</text>
</comment>
<gene>
    <name evidence="1" type="primary">katG1</name>
    <name type="ordered locus">Shewmr4_0311</name>
</gene>
<organism>
    <name type="scientific">Shewanella sp. (strain MR-4)</name>
    <dbReference type="NCBI Taxonomy" id="60480"/>
    <lineage>
        <taxon>Bacteria</taxon>
        <taxon>Pseudomonadati</taxon>
        <taxon>Pseudomonadota</taxon>
        <taxon>Gammaproteobacteria</taxon>
        <taxon>Alteromonadales</taxon>
        <taxon>Shewanellaceae</taxon>
        <taxon>Shewanella</taxon>
    </lineage>
</organism>
<reference key="1">
    <citation type="submission" date="2006-08" db="EMBL/GenBank/DDBJ databases">
        <title>Complete sequence of Shewanella sp. MR-4.</title>
        <authorList>
            <consortium name="US DOE Joint Genome Institute"/>
            <person name="Copeland A."/>
            <person name="Lucas S."/>
            <person name="Lapidus A."/>
            <person name="Barry K."/>
            <person name="Detter J.C."/>
            <person name="Glavina del Rio T."/>
            <person name="Hammon N."/>
            <person name="Israni S."/>
            <person name="Dalin E."/>
            <person name="Tice H."/>
            <person name="Pitluck S."/>
            <person name="Kiss H."/>
            <person name="Brettin T."/>
            <person name="Bruce D."/>
            <person name="Han C."/>
            <person name="Tapia R."/>
            <person name="Gilna P."/>
            <person name="Schmutz J."/>
            <person name="Larimer F."/>
            <person name="Land M."/>
            <person name="Hauser L."/>
            <person name="Kyrpides N."/>
            <person name="Mikhailova N."/>
            <person name="Nealson K."/>
            <person name="Konstantinidis K."/>
            <person name="Klappenbach J."/>
            <person name="Tiedje J."/>
            <person name="Richardson P."/>
        </authorList>
    </citation>
    <scope>NUCLEOTIDE SEQUENCE [LARGE SCALE GENOMIC DNA]</scope>
    <source>
        <strain>MR-4</strain>
    </source>
</reference>